<organism>
    <name type="scientific">Rattus norvegicus</name>
    <name type="common">Rat</name>
    <dbReference type="NCBI Taxonomy" id="10116"/>
    <lineage>
        <taxon>Eukaryota</taxon>
        <taxon>Metazoa</taxon>
        <taxon>Chordata</taxon>
        <taxon>Craniata</taxon>
        <taxon>Vertebrata</taxon>
        <taxon>Euteleostomi</taxon>
        <taxon>Mammalia</taxon>
        <taxon>Eutheria</taxon>
        <taxon>Euarchontoglires</taxon>
        <taxon>Glires</taxon>
        <taxon>Rodentia</taxon>
        <taxon>Myomorpha</taxon>
        <taxon>Muroidea</taxon>
        <taxon>Muridae</taxon>
        <taxon>Murinae</taxon>
        <taxon>Rattus</taxon>
    </lineage>
</organism>
<sequence length="470" mass="52882">MHFSIPETESRSGDSGGSTYVAYNIHVNGVLHCRVRYSQLLGLHEQLRKEYGANVLPAFPPKKLFSLTPAEVEQRREQLEKYMQAVRQDPLLGSSETFNSFLRRAQQETQQVPTEEVSLEVLLSDGQKVLVNVLTSDQTEDVLEAVAAKLDLPDDLIGYFSLFLVREKEDGAFSFVRKLQEFELPYVSVTSLRSQEYKIVLRKSYWDSAYDDDVMENRVGLNLLYAQTVSDIEHGWILVTKEQHRQLKSLQEKVSKKEFLRLAQTLRHYGYLRFDACVADFPEKDCPVVVSAGNSELSLQLRLPGQQLREGSFRVTRMRCWRVTSSVPLPSGGTSTPSRGRGEVRLELAFEYLMSKDRLQWVTITSPQAIMMSICLQSMVDELMVKKSGGSIRKMLRRRVGGNLRRSDSQQAVKSPPLLESPDASRESMVKLSSKLSAVSLRGIGSPSTDASASAVHGNFAFEGIGDEDL</sequence>
<dbReference type="EMBL" id="BC078931">
    <property type="protein sequence ID" value="AAH78931.1"/>
    <property type="molecule type" value="mRNA"/>
</dbReference>
<dbReference type="RefSeq" id="NP_001011981.1">
    <property type="nucleotide sequence ID" value="NM_001011981.1"/>
</dbReference>
<dbReference type="BMRB" id="Q6AYS6"/>
<dbReference type="SMR" id="Q6AYS6"/>
<dbReference type="FunCoup" id="Q6AYS6">
    <property type="interactions" value="2539"/>
</dbReference>
<dbReference type="IntAct" id="Q6AYS6">
    <property type="interactions" value="2"/>
</dbReference>
<dbReference type="STRING" id="10116.ENSRNOP00000070417"/>
<dbReference type="iPTMnet" id="Q6AYS6"/>
<dbReference type="PhosphoSitePlus" id="Q6AYS6"/>
<dbReference type="jPOST" id="Q6AYS6"/>
<dbReference type="PaxDb" id="10116-ENSRNOP00000029617"/>
<dbReference type="GeneID" id="298836"/>
<dbReference type="KEGG" id="rno:298836"/>
<dbReference type="AGR" id="RGD:1306424"/>
<dbReference type="CTD" id="9784"/>
<dbReference type="RGD" id="1306424">
    <property type="gene designation" value="Snx17"/>
</dbReference>
<dbReference type="eggNOG" id="KOG3784">
    <property type="taxonomic scope" value="Eukaryota"/>
</dbReference>
<dbReference type="InParanoid" id="Q6AYS6"/>
<dbReference type="OrthoDB" id="5772781at2759"/>
<dbReference type="PhylomeDB" id="Q6AYS6"/>
<dbReference type="PRO" id="PR:Q6AYS6"/>
<dbReference type="Proteomes" id="UP000002494">
    <property type="component" value="Unplaced"/>
</dbReference>
<dbReference type="GO" id="GO:0005737">
    <property type="term" value="C:cytoplasm"/>
    <property type="evidence" value="ECO:0000266"/>
    <property type="project" value="RGD"/>
</dbReference>
<dbReference type="GO" id="GO:0031410">
    <property type="term" value="C:cytoplasmic vesicle"/>
    <property type="evidence" value="ECO:0000250"/>
    <property type="project" value="UniProtKB"/>
</dbReference>
<dbReference type="GO" id="GO:0005829">
    <property type="term" value="C:cytosol"/>
    <property type="evidence" value="ECO:0000250"/>
    <property type="project" value="UniProtKB"/>
</dbReference>
<dbReference type="GO" id="GO:0005769">
    <property type="term" value="C:early endosome"/>
    <property type="evidence" value="ECO:0000266"/>
    <property type="project" value="RGD"/>
</dbReference>
<dbReference type="GO" id="GO:0005768">
    <property type="term" value="C:endosome"/>
    <property type="evidence" value="ECO:0000250"/>
    <property type="project" value="UniProtKB"/>
</dbReference>
<dbReference type="GO" id="GO:0010008">
    <property type="term" value="C:endosome membrane"/>
    <property type="evidence" value="ECO:0000266"/>
    <property type="project" value="RGD"/>
</dbReference>
<dbReference type="GO" id="GO:0005794">
    <property type="term" value="C:Golgi apparatus"/>
    <property type="evidence" value="ECO:0000266"/>
    <property type="project" value="RGD"/>
</dbReference>
<dbReference type="GO" id="GO:0032991">
    <property type="term" value="C:protein-containing complex"/>
    <property type="evidence" value="ECO:0000266"/>
    <property type="project" value="RGD"/>
</dbReference>
<dbReference type="GO" id="GO:0050750">
    <property type="term" value="F:low-density lipoprotein particle receptor binding"/>
    <property type="evidence" value="ECO:0000266"/>
    <property type="project" value="RGD"/>
</dbReference>
<dbReference type="GO" id="GO:0035091">
    <property type="term" value="F:phosphatidylinositol binding"/>
    <property type="evidence" value="ECO:0000250"/>
    <property type="project" value="UniProtKB"/>
</dbReference>
<dbReference type="GO" id="GO:0035904">
    <property type="term" value="P:aorta development"/>
    <property type="evidence" value="ECO:0000266"/>
    <property type="project" value="RGD"/>
</dbReference>
<dbReference type="GO" id="GO:0003279">
    <property type="term" value="P:cardiac septum development"/>
    <property type="evidence" value="ECO:0000266"/>
    <property type="project" value="RGD"/>
</dbReference>
<dbReference type="GO" id="GO:0060976">
    <property type="term" value="P:coronary vasculature development"/>
    <property type="evidence" value="ECO:0000266"/>
    <property type="project" value="RGD"/>
</dbReference>
<dbReference type="GO" id="GO:0032456">
    <property type="term" value="P:endocytic recycling"/>
    <property type="evidence" value="ECO:0000250"/>
    <property type="project" value="UniProtKB"/>
</dbReference>
<dbReference type="GO" id="GO:0006886">
    <property type="term" value="P:intracellular protein transport"/>
    <property type="evidence" value="ECO:0000318"/>
    <property type="project" value="GO_Central"/>
</dbReference>
<dbReference type="GO" id="GO:0001822">
    <property type="term" value="P:kidney development"/>
    <property type="evidence" value="ECO:0000266"/>
    <property type="project" value="RGD"/>
</dbReference>
<dbReference type="GO" id="GO:0006898">
    <property type="term" value="P:receptor-mediated endocytosis"/>
    <property type="evidence" value="ECO:0000266"/>
    <property type="project" value="RGD"/>
</dbReference>
<dbReference type="GO" id="GO:0007165">
    <property type="term" value="P:signal transduction"/>
    <property type="evidence" value="ECO:0007669"/>
    <property type="project" value="InterPro"/>
</dbReference>
<dbReference type="CDD" id="cd13337">
    <property type="entry name" value="FERM-like_C_SNX17"/>
    <property type="match status" value="1"/>
</dbReference>
<dbReference type="CDD" id="cd16121">
    <property type="entry name" value="FERM_F1_SNX17"/>
    <property type="match status" value="1"/>
</dbReference>
<dbReference type="CDD" id="cd06885">
    <property type="entry name" value="PX_SNX17_31"/>
    <property type="match status" value="1"/>
</dbReference>
<dbReference type="FunFam" id="1.20.80.60:FF:000001">
    <property type="entry name" value="Sorting nexin-17 isoform1"/>
    <property type="match status" value="1"/>
</dbReference>
<dbReference type="FunFam" id="2.30.29.30:FF:000145">
    <property type="entry name" value="Sorting nexin-17 isoform1"/>
    <property type="match status" value="1"/>
</dbReference>
<dbReference type="FunFam" id="3.10.20.90:FF:000094">
    <property type="entry name" value="Sorting nexin-17 isoform1"/>
    <property type="match status" value="1"/>
</dbReference>
<dbReference type="FunFam" id="3.30.1520.10:FF:000008">
    <property type="entry name" value="Sorting nexin-17 isoform1"/>
    <property type="match status" value="1"/>
</dbReference>
<dbReference type="Gene3D" id="1.20.80.60">
    <property type="match status" value="1"/>
</dbReference>
<dbReference type="Gene3D" id="3.10.20.90">
    <property type="entry name" value="Phosphatidylinositol 3-kinase Catalytic Subunit, Chain A, domain 1"/>
    <property type="match status" value="1"/>
</dbReference>
<dbReference type="Gene3D" id="3.30.1520.10">
    <property type="entry name" value="Phox-like domain"/>
    <property type="match status" value="1"/>
</dbReference>
<dbReference type="Gene3D" id="2.30.29.30">
    <property type="entry name" value="Pleckstrin-homology domain (PH domain)/Phosphotyrosine-binding domain (PTB)"/>
    <property type="match status" value="1"/>
</dbReference>
<dbReference type="InterPro" id="IPR011993">
    <property type="entry name" value="PH-like_dom_sf"/>
</dbReference>
<dbReference type="InterPro" id="IPR001683">
    <property type="entry name" value="PX_dom"/>
</dbReference>
<dbReference type="InterPro" id="IPR036871">
    <property type="entry name" value="PX_dom_sf"/>
</dbReference>
<dbReference type="InterPro" id="IPR000159">
    <property type="entry name" value="RA_dom"/>
</dbReference>
<dbReference type="InterPro" id="IPR048763">
    <property type="entry name" value="SNX17-31_FERM_F1"/>
</dbReference>
<dbReference type="InterPro" id="IPR048767">
    <property type="entry name" value="SNX17-31_FERM_F2"/>
</dbReference>
<dbReference type="InterPro" id="IPR040842">
    <property type="entry name" value="SNX17/31_FERM"/>
</dbReference>
<dbReference type="InterPro" id="IPR037836">
    <property type="entry name" value="SNX17_FERM-like_dom"/>
</dbReference>
<dbReference type="InterPro" id="IPR028666">
    <property type="entry name" value="SNX17_FERM_N"/>
</dbReference>
<dbReference type="PANTHER" id="PTHR12431">
    <property type="entry name" value="SORTING NEXIN 17 AND 27"/>
    <property type="match status" value="1"/>
</dbReference>
<dbReference type="PANTHER" id="PTHR12431:SF16">
    <property type="entry name" value="SORTING NEXIN-17"/>
    <property type="match status" value="1"/>
</dbReference>
<dbReference type="Pfam" id="PF00787">
    <property type="entry name" value="PX"/>
    <property type="match status" value="1"/>
</dbReference>
<dbReference type="Pfam" id="PF21273">
    <property type="entry name" value="SNX17-27-31_F1_FERM"/>
    <property type="match status" value="1"/>
</dbReference>
<dbReference type="Pfam" id="PF21271">
    <property type="entry name" value="SNX17-31_F2_FERM"/>
    <property type="match status" value="1"/>
</dbReference>
<dbReference type="Pfam" id="PF18116">
    <property type="entry name" value="SNX17_FERM_C"/>
    <property type="match status" value="1"/>
</dbReference>
<dbReference type="SMART" id="SM00312">
    <property type="entry name" value="PX"/>
    <property type="match status" value="1"/>
</dbReference>
<dbReference type="SUPFAM" id="SSF64268">
    <property type="entry name" value="PX domain"/>
    <property type="match status" value="1"/>
</dbReference>
<dbReference type="PROSITE" id="PS50195">
    <property type="entry name" value="PX"/>
    <property type="match status" value="1"/>
</dbReference>
<dbReference type="PROSITE" id="PS50200">
    <property type="entry name" value="RA"/>
    <property type="match status" value="1"/>
</dbReference>
<evidence type="ECO:0000250" key="1"/>
<evidence type="ECO:0000250" key="2">
    <source>
        <dbReference type="UniProtKB" id="Q15036"/>
    </source>
</evidence>
<evidence type="ECO:0000250" key="3">
    <source>
        <dbReference type="UniProtKB" id="Q8BVL3"/>
    </source>
</evidence>
<evidence type="ECO:0000255" key="4">
    <source>
        <dbReference type="PROSITE-ProRule" id="PRU00147"/>
    </source>
</evidence>
<evidence type="ECO:0000255" key="5">
    <source>
        <dbReference type="PROSITE-ProRule" id="PRU00166"/>
    </source>
</evidence>
<evidence type="ECO:0000256" key="6">
    <source>
        <dbReference type="SAM" id="MobiDB-lite"/>
    </source>
</evidence>
<evidence type="ECO:0000305" key="7"/>
<evidence type="ECO:0007744" key="8">
    <source>
    </source>
</evidence>
<feature type="chain" id="PRO_0000236206" description="Sorting nexin-17">
    <location>
        <begin position="1"/>
        <end position="470"/>
    </location>
</feature>
<feature type="domain" description="PX" evidence="4">
    <location>
        <begin position="1"/>
        <end position="109"/>
    </location>
</feature>
<feature type="domain" description="Ras-associating" evidence="5">
    <location>
        <begin position="115"/>
        <end position="206"/>
    </location>
</feature>
<feature type="region of interest" description="FERM-like" evidence="1">
    <location>
        <begin position="115"/>
        <end position="432"/>
    </location>
</feature>
<feature type="region of interest" description="PTB-like F3 module" evidence="1">
    <location>
        <begin position="270"/>
        <end position="432"/>
    </location>
</feature>
<feature type="region of interest" description="Disordered" evidence="6">
    <location>
        <begin position="401"/>
        <end position="425"/>
    </location>
</feature>
<feature type="binding site" evidence="1">
    <location>
        <position position="36"/>
    </location>
    <ligand>
        <name>a 1,2-diacyl-sn-glycero-3-phospho-(1D-myo-inositol-3-phosphate)</name>
        <dbReference type="ChEBI" id="CHEBI:58088"/>
    </ligand>
</feature>
<feature type="binding site" evidence="1">
    <location>
        <position position="38"/>
    </location>
    <ligand>
        <name>a 1,2-diacyl-sn-glycero-3-phospho-(1D-myo-inositol-3-phosphate)</name>
        <dbReference type="ChEBI" id="CHEBI:58088"/>
    </ligand>
</feature>
<feature type="binding site" evidence="1">
    <location>
        <position position="62"/>
    </location>
    <ligand>
        <name>a 1,2-diacyl-sn-glycero-3-phospho-(1D-myo-inositol-3-phosphate)</name>
        <dbReference type="ChEBI" id="CHEBI:58088"/>
    </ligand>
</feature>
<feature type="binding site" evidence="1">
    <location>
        <position position="75"/>
    </location>
    <ligand>
        <name>a 1,2-diacyl-sn-glycero-3-phospho-(1D-myo-inositol-3-phosphate)</name>
        <dbReference type="ChEBI" id="CHEBI:58088"/>
    </ligand>
</feature>
<feature type="modified residue" description="Phosphoserine" evidence="2">
    <location>
        <position position="407"/>
    </location>
</feature>
<feature type="modified residue" description="Phosphoserine" evidence="2">
    <location>
        <position position="409"/>
    </location>
</feature>
<feature type="modified residue" description="Phosphoserine" evidence="8">
    <location>
        <position position="415"/>
    </location>
</feature>
<feature type="modified residue" description="Phosphoserine" evidence="8">
    <location>
        <position position="421"/>
    </location>
</feature>
<feature type="modified residue" description="Phosphoserine" evidence="8">
    <location>
        <position position="437"/>
    </location>
</feature>
<feature type="modified residue" description="Phosphoserine" evidence="8">
    <location>
        <position position="440"/>
    </location>
</feature>
<comment type="function">
    <text evidence="2 3">Critical regulator of endosomal recycling of numerous surface proteins, including integrins, signaling receptor and channels (By similarity). Binds to NPxY sequences in the cytoplasmic tails of target cargos (By similarity). Associates with retriever and CCC complexes to prevent lysosomal degradation and promote cell surface recycling of numerous cargos such as integrins ITGB1, ITGB5 and their associated alpha subunits (By similarity). Also required for maintenance of normal cell surface levels of APP and LRP1 (By similarity). Interacts with membranes containing phosphatidylinositol 3-phosphate (PtdIns(3P)) (By similarity).</text>
</comment>
<comment type="subunit">
    <text evidence="2 3">Monomer (By similarity). Interacts with APP (via cytoplasmic YXNPXY motif) (By similarity). Interacts with KIF1B (By similarity). Interacts with the C-termini of P-selectin, PTC, LDLR, VLDLR, LRP1 and LRP8 (By similarity). Interacts with KRIT1 (via N-terminus) (By similarity). Interacts with HRAS (By similarity). Interacts with ITGB1 and ITGB5 (via NPxY motif) (By similarity). Interacts with CCDC22 and CCDC93; the interaction associates SNX17 with the CCC complex (By similarity). Interacts (via C-terminus) with VPS26C and VPS35L; the interactions are direct and associate SNX17 with the retriever complex (By similarity).</text>
</comment>
<comment type="subcellular location">
    <subcellularLocation>
        <location evidence="2">Cytoplasm</location>
    </subcellularLocation>
    <subcellularLocation>
        <location evidence="2">Early endosome</location>
    </subcellularLocation>
    <subcellularLocation>
        <location evidence="2">Cytoplasmic vesicle membrane</location>
        <topology evidence="2">Peripheral membrane protein</topology>
        <orientation evidence="2">Cytoplasmic side</orientation>
    </subcellularLocation>
</comment>
<comment type="domain">
    <text evidence="2">The PX domain mediates specific binding to phosphatidylinositol 3-phosphate (PtdIns(P3)). Required for association with endosomes.</text>
</comment>
<comment type="domain">
    <text evidence="2">The PTB-like F3 module within the FERM-like domain mediates cargo recognition via their NPxY sequences, while the F1 module (Ras-associating) is responsible for interaction with membrane-bound HRAS.</text>
</comment>
<comment type="similarity">
    <text evidence="7">Belongs to the sorting nexin family.</text>
</comment>
<keyword id="KW-0963">Cytoplasm</keyword>
<keyword id="KW-0968">Cytoplasmic vesicle</keyword>
<keyword id="KW-0967">Endosome</keyword>
<keyword id="KW-0446">Lipid-binding</keyword>
<keyword id="KW-0472">Membrane</keyword>
<keyword id="KW-0597">Phosphoprotein</keyword>
<keyword id="KW-0653">Protein transport</keyword>
<keyword id="KW-1185">Reference proteome</keyword>
<keyword id="KW-0813">Transport</keyword>
<gene>
    <name type="primary">Snx17</name>
</gene>
<proteinExistence type="evidence at protein level"/>
<protein>
    <recommendedName>
        <fullName>Sorting nexin-17</fullName>
    </recommendedName>
</protein>
<name>SNX17_RAT</name>
<reference key="1">
    <citation type="journal article" date="2004" name="Genome Res.">
        <title>The status, quality, and expansion of the NIH full-length cDNA project: the Mammalian Gene Collection (MGC).</title>
        <authorList>
            <consortium name="The MGC Project Team"/>
        </authorList>
    </citation>
    <scope>NUCLEOTIDE SEQUENCE [LARGE SCALE MRNA]</scope>
    <source>
        <tissue>Kidney</tissue>
    </source>
</reference>
<reference key="2">
    <citation type="journal article" date="2012" name="Nat. Commun.">
        <title>Quantitative maps of protein phosphorylation sites across 14 different rat organs and tissues.</title>
        <authorList>
            <person name="Lundby A."/>
            <person name="Secher A."/>
            <person name="Lage K."/>
            <person name="Nordsborg N.B."/>
            <person name="Dmytriyev A."/>
            <person name="Lundby C."/>
            <person name="Olsen J.V."/>
        </authorList>
    </citation>
    <scope>PHOSPHORYLATION [LARGE SCALE ANALYSIS] AT SER-415; SER-421; SER-437 AND SER-440</scope>
    <scope>IDENTIFICATION BY MASS SPECTROMETRY [LARGE SCALE ANALYSIS]</scope>
</reference>
<accession>Q6AYS6</accession>